<protein>
    <recommendedName>
        <fullName evidence="17">Adhesion G protein-coupled receptor A2</fullName>
    </recommendedName>
    <alternativeName>
        <fullName evidence="16">G-protein coupled receptor 124</fullName>
    </alternativeName>
    <alternativeName>
        <fullName evidence="15">Tumor endothelial marker 5</fullName>
    </alternativeName>
</protein>
<feature type="signal peptide" evidence="2">
    <location>
        <begin position="1"/>
        <end position="33"/>
    </location>
</feature>
<feature type="chain" id="PRO_0000012899" description="Adhesion G protein-coupled receptor A2">
    <location>
        <begin position="34"/>
        <end position="1336"/>
    </location>
</feature>
<feature type="topological domain" description="Extracellular" evidence="1">
    <location>
        <begin position="34"/>
        <end position="769"/>
    </location>
</feature>
<feature type="transmembrane region" description="Helical; Name=1" evidence="2">
    <location>
        <begin position="770"/>
        <end position="790"/>
    </location>
</feature>
<feature type="topological domain" description="Cytoplasmic" evidence="2">
    <location>
        <begin position="791"/>
        <end position="805"/>
    </location>
</feature>
<feature type="transmembrane region" description="Helical; Name=2" evidence="2">
    <location>
        <begin position="806"/>
        <end position="826"/>
    </location>
</feature>
<feature type="topological domain" description="Extracellular" evidence="2">
    <location>
        <begin position="827"/>
        <end position="830"/>
    </location>
</feature>
<feature type="transmembrane region" description="Helical; Name=3" evidence="2">
    <location>
        <begin position="831"/>
        <end position="851"/>
    </location>
</feature>
<feature type="topological domain" description="Cytoplasmic" evidence="2">
    <location>
        <begin position="852"/>
        <end position="884"/>
    </location>
</feature>
<feature type="transmembrane region" description="Helical; Name=4" evidence="2">
    <location>
        <begin position="885"/>
        <end position="905"/>
    </location>
</feature>
<feature type="topological domain" description="Extracellular" evidence="2">
    <location>
        <begin position="906"/>
        <end position="922"/>
    </location>
</feature>
<feature type="transmembrane region" description="Helical; Name=5" evidence="2">
    <location>
        <begin position="923"/>
        <end position="943"/>
    </location>
</feature>
<feature type="topological domain" description="Cytoplasmic" evidence="2">
    <location>
        <begin position="944"/>
        <end position="1016"/>
    </location>
</feature>
<feature type="transmembrane region" description="Helical; Name=6" evidence="2">
    <location>
        <begin position="1017"/>
        <end position="1037"/>
    </location>
</feature>
<feature type="topological domain" description="Extracellular" evidence="2">
    <location>
        <begin position="1038"/>
        <end position="1044"/>
    </location>
</feature>
<feature type="transmembrane region" description="Helical; Name=7" evidence="2">
    <location>
        <begin position="1045"/>
        <end position="1065"/>
    </location>
</feature>
<feature type="topological domain" description="Cytoplasmic" evidence="1">
    <location>
        <begin position="1066"/>
        <end position="1336"/>
    </location>
</feature>
<feature type="repeat" description="LRR 1" evidence="2">
    <location>
        <begin position="85"/>
        <end position="106"/>
    </location>
</feature>
<feature type="repeat" description="LRR 2" evidence="2">
    <location>
        <begin position="109"/>
        <end position="130"/>
    </location>
</feature>
<feature type="repeat" description="LRR 3" evidence="2">
    <location>
        <begin position="133"/>
        <end position="154"/>
    </location>
</feature>
<feature type="repeat" description="LRR 4" evidence="2">
    <location>
        <begin position="157"/>
        <end position="178"/>
    </location>
</feature>
<feature type="domain" description="LRRCT" evidence="2">
    <location>
        <begin position="190"/>
        <end position="241"/>
    </location>
</feature>
<feature type="domain" description="Ig-like" evidence="4">
    <location>
        <begin position="247"/>
        <end position="344"/>
    </location>
</feature>
<feature type="domain" description="GAIN-B" evidence="3">
    <location>
        <begin position="594"/>
        <end position="757"/>
    </location>
</feature>
<feature type="region of interest" description="GPS" evidence="3">
    <location>
        <begin position="711"/>
        <end position="757"/>
    </location>
</feature>
<feature type="region of interest" description="Disordered" evidence="5">
    <location>
        <begin position="1084"/>
        <end position="1310"/>
    </location>
</feature>
<feature type="short sequence motif" description="RGD" evidence="1">
    <location>
        <begin position="362"/>
        <end position="364"/>
    </location>
</feature>
<feature type="short sequence motif" description="PDZ-binding" evidence="12">
    <location>
        <begin position="1333"/>
        <end position="1336"/>
    </location>
</feature>
<feature type="compositionally biased region" description="Low complexity" evidence="5">
    <location>
        <begin position="1084"/>
        <end position="1095"/>
    </location>
</feature>
<feature type="compositionally biased region" description="Low complexity" evidence="5">
    <location>
        <begin position="1110"/>
        <end position="1124"/>
    </location>
</feature>
<feature type="compositionally biased region" description="Polar residues" evidence="5">
    <location>
        <begin position="1133"/>
        <end position="1143"/>
    </location>
</feature>
<feature type="compositionally biased region" description="Basic residues" evidence="5">
    <location>
        <begin position="1166"/>
        <end position="1186"/>
    </location>
</feature>
<feature type="compositionally biased region" description="Polar residues" evidence="5">
    <location>
        <begin position="1213"/>
        <end position="1234"/>
    </location>
</feature>
<feature type="site" description="Cleavage; by thrombin" evidence="1">
    <location>
        <begin position="369"/>
        <end position="370"/>
    </location>
</feature>
<feature type="site" description="Cleavage; by thrombin" evidence="1">
    <location>
        <begin position="398"/>
        <end position="399"/>
    </location>
</feature>
<feature type="modified residue" description="Phosphoserine" evidence="1">
    <location>
        <position position="1104"/>
    </location>
</feature>
<feature type="glycosylation site" description="N-linked (GlcNAc...) asparagine" evidence="2">
    <location>
        <position position="84"/>
    </location>
</feature>
<feature type="glycosylation site" description="N-linked (GlcNAc...) asparagine" evidence="2">
    <location>
        <position position="101"/>
    </location>
</feature>
<feature type="glycosylation site" description="N-linked (GlcNAc...) asparagine" evidence="2">
    <location>
        <position position="162"/>
    </location>
</feature>
<feature type="glycosylation site" description="N-linked (GlcNAc...) asparagine" evidence="2">
    <location>
        <position position="275"/>
    </location>
</feature>
<feature type="glycosylation site" description="N-linked (GlcNAc...) asparagine" evidence="2">
    <location>
        <position position="602"/>
    </location>
</feature>
<feature type="glycosylation site" description="N-linked (GlcNAc...) asparagine" evidence="2">
    <location>
        <position position="691"/>
    </location>
</feature>
<feature type="glycosylation site" description="N-linked (GlcNAc...) asparagine" evidence="2">
    <location>
        <position position="735"/>
    </location>
</feature>
<feature type="disulfide bond" evidence="4">
    <location>
        <begin position="268"/>
        <end position="328"/>
    </location>
</feature>
<feature type="disulfide bond" evidence="3">
    <location>
        <begin position="727"/>
        <end position="741"/>
    </location>
</feature>
<feature type="mutagenesis site" description="No effect on potentiation of WNT7A signaling." evidence="12">
    <original>D</original>
    <variation>E</variation>
    <location>
        <position position="364"/>
    </location>
</feature>
<feature type="mutagenesis site" description="Fails to interact with DLG1. No effect on cell surface localization." evidence="12">
    <location>
        <begin position="1333"/>
        <end position="1336"/>
    </location>
</feature>
<reference key="1">
    <citation type="journal article" date="2001" name="Cancer Res.">
        <title>Cell surface tumor endothelial markers are conserved in mice and humans.</title>
        <authorList>
            <person name="Carson-Walter E.B."/>
            <person name="Watkins D.N."/>
            <person name="Nanda A."/>
            <person name="Vogelstein B."/>
            <person name="Kinzler K.W."/>
            <person name="St Croix B."/>
        </authorList>
    </citation>
    <scope>NUCLEOTIDE SEQUENCE [MRNA]</scope>
    <scope>TISSUE SPECIFICITY</scope>
</reference>
<reference key="2">
    <citation type="journal article" date="2004" name="Genome Res.">
        <title>The status, quality, and expansion of the NIH full-length cDNA project: the Mammalian Gene Collection (MGC).</title>
        <authorList>
            <consortium name="The MGC Project Team"/>
        </authorList>
    </citation>
    <scope>NUCLEOTIDE SEQUENCE [LARGE SCALE MRNA]</scope>
    <source>
        <tissue>Brain</tissue>
    </source>
</reference>
<reference key="3">
    <citation type="journal article" date="2009" name="Gene Expr. Patterns">
        <title>Expression pattern of LRR and Ig domain-containing protein (LRRIG protein) in the early mouse embryo.</title>
        <authorList>
            <person name="Homma S."/>
            <person name="Shimada T."/>
            <person name="Hikake T."/>
            <person name="Yaginuma H."/>
        </authorList>
    </citation>
    <scope>DEVELOPMENTAL STAGE</scope>
</reference>
<reference key="4">
    <citation type="journal article" date="2010" name="Cell">
        <title>A tissue-specific atlas of mouse protein phosphorylation and expression.</title>
        <authorList>
            <person name="Huttlin E.L."/>
            <person name="Jedrychowski M.P."/>
            <person name="Elias J.E."/>
            <person name="Goswami T."/>
            <person name="Rad R."/>
            <person name="Beausoleil S.A."/>
            <person name="Villen J."/>
            <person name="Haas W."/>
            <person name="Sowa M.E."/>
            <person name="Gygi S.P."/>
        </authorList>
    </citation>
    <scope>IDENTIFICATION BY MASS SPECTROMETRY [LARGE SCALE ANALYSIS]</scope>
    <source>
        <tissue>Lung</tissue>
    </source>
</reference>
<reference key="5">
    <citation type="journal article" date="2010" name="Science">
        <title>Essential regulation of CNS angiogenesis by the orphan G protein-coupled receptor GPR124.</title>
        <authorList>
            <person name="Kuhnert F."/>
            <person name="Mancuso M.R."/>
            <person name="Shamloo A."/>
            <person name="Wang H.T."/>
            <person name="Choksi V."/>
            <person name="Florek M."/>
            <person name="Su H."/>
            <person name="Fruttiger M."/>
            <person name="Young W.L."/>
            <person name="Heilshorn S.C."/>
            <person name="Kuo C.J."/>
        </authorList>
    </citation>
    <scope>FUNCTION</scope>
    <scope>TISSUE SPECIFICITY</scope>
    <scope>DISRUPTION PHENOTYPE</scope>
</reference>
<reference key="6">
    <citation type="journal article" date="2011" name="Proc. Natl. Acad. Sci. U.S.A.">
        <title>Angiogenic sprouting into neural tissue requires Gpr124, an orphan G protein-coupled receptor.</title>
        <authorList>
            <person name="Anderson K.D."/>
            <person name="Pan L."/>
            <person name="Yang X.M."/>
            <person name="Hughes V.C."/>
            <person name="Walls J.R."/>
            <person name="Dominguez M.G."/>
            <person name="Simmons M.V."/>
            <person name="Burfeind P."/>
            <person name="Xue Y."/>
            <person name="Wei Y."/>
            <person name="Macdonald L.E."/>
            <person name="Thurston G."/>
            <person name="Daly C."/>
            <person name="Lin H.C."/>
            <person name="Economides A.N."/>
            <person name="Valenzuela D.M."/>
            <person name="Murphy A.J."/>
            <person name="Yancopoulos G.D."/>
            <person name="Gale N.W."/>
        </authorList>
    </citation>
    <scope>FUNCTION</scope>
    <scope>TISSUE SPECIFICITY</scope>
    <scope>DEVELOPMENTAL STAGE</scope>
    <scope>INDUCTION</scope>
    <scope>DISRUPTION PHENOTYPE</scope>
</reference>
<reference key="7">
    <citation type="journal article" date="2011" name="Proc. Natl. Acad. Sci. U.S.A.">
        <title>GPR124, an orphan G protein-coupled receptor, is required for CNS-specific vascularization and establishment of the blood-brain barrier.</title>
        <authorList>
            <person name="Cullen M."/>
            <person name="Elzarrad M.K."/>
            <person name="Seaman S."/>
            <person name="Zudaire E."/>
            <person name="Stevens J."/>
            <person name="Yang M.Y."/>
            <person name="Li X."/>
            <person name="Chaudhary A."/>
            <person name="Xu L."/>
            <person name="Hilton M.B."/>
            <person name="Logsdon D."/>
            <person name="Hsiao E."/>
            <person name="Stein E.V."/>
            <person name="Cuttitta F."/>
            <person name="Haines D.C."/>
            <person name="Nagashima K."/>
            <person name="Tessarollo L."/>
            <person name="St Croix B."/>
        </authorList>
    </citation>
    <scope>FUNCTION</scope>
    <scope>DISRUPTION PHENOTYPE</scope>
</reference>
<reference key="8">
    <citation type="journal article" date="2014" name="Dev. Cell">
        <title>Gpr124 controls CNS angiogenesis and blood-brain barrier integrity by promoting ligand-specific canonical wnt signaling.</title>
        <authorList>
            <person name="Zhou Y."/>
            <person name="Nathans J."/>
        </authorList>
    </citation>
    <scope>FUNCTION</scope>
    <scope>DISRUPTION PHENOTYPE</scope>
</reference>
<reference key="9">
    <citation type="journal article" date="2015" name="Cell Rep.">
        <title>GPR124 functions as a WNT7-specific coactivator of canonical beta-catenin signaling.</title>
        <authorList>
            <person name="Posokhova E."/>
            <person name="Shukla A."/>
            <person name="Seaman S."/>
            <person name="Volate S."/>
            <person name="Hilton M.B."/>
            <person name="Wu B."/>
            <person name="Morris H."/>
            <person name="Swing D.A."/>
            <person name="Zhou M."/>
            <person name="Zudaire E."/>
            <person name="Rubin J.S."/>
            <person name="St Croix B."/>
        </authorList>
    </citation>
    <scope>FUNCTION</scope>
    <scope>INTERACTION WITH DLG1</scope>
    <scope>SUBCELLULAR LOCATION</scope>
    <scope>DOMAIN LRR</scope>
    <scope>MOTIF PDZ-BINDING</scope>
    <scope>MUTAGENESIS OF ASP-364 AND 1333-GLU--VAL-1336</scope>
</reference>
<reference key="10">
    <citation type="journal article" date="2017" name="Nat. Med.">
        <title>Gpr124 is essential for blood-brain barrier integrity in central nervous system disease.</title>
        <authorList>
            <person name="Chang J."/>
            <person name="Mancuso M.R."/>
            <person name="Maier C."/>
            <person name="Liang X."/>
            <person name="Yuki K."/>
            <person name="Yang L."/>
            <person name="Kwong J.W."/>
            <person name="Wang J."/>
            <person name="Rao V."/>
            <person name="Vallon M."/>
            <person name="Kosinski C."/>
            <person name="Zhang J.J."/>
            <person name="Mah A.T."/>
            <person name="Xu L."/>
            <person name="Li L."/>
            <person name="Gholamin S."/>
            <person name="Reyes T.F."/>
            <person name="Li R."/>
            <person name="Kuhnert F."/>
            <person name="Han X."/>
            <person name="Yuan J."/>
            <person name="Chiou S.H."/>
            <person name="Brettman A.D."/>
            <person name="Daly L."/>
            <person name="Corney D.C."/>
            <person name="Cheshier S.H."/>
            <person name="Shortliffe L.D."/>
            <person name="Wu X."/>
            <person name="Snyder M."/>
            <person name="Chan P."/>
            <person name="Giffard R.G."/>
            <person name="Chang H.Y."/>
            <person name="Andreasson K."/>
            <person name="Kuo C.J."/>
        </authorList>
    </citation>
    <scope>FUNCTION</scope>
    <scope>DISRUPTION PHENOTYPE</scope>
</reference>
<reference key="11">
    <citation type="journal article" date="2017" name="Neuron">
        <title>Reck and Gpr124 Are Essential Receptor Cofactors for Wnt7a/Wnt7b-specific signaling in mammalian CNS angiogenesis and blood-brain barrier regulation.</title>
        <authorList>
            <person name="Cho C."/>
            <person name="Smallwood P.M."/>
            <person name="Nathans J."/>
        </authorList>
    </citation>
    <scope>FUNCTION</scope>
    <scope>SUBCELLULAR LOCATION</scope>
    <scope>INTERACTION WITH RECK</scope>
</reference>
<comment type="function">
    <text evidence="1 8 9 10 11 12 13 14">Endothelial receptor which functions together with RECK to enable brain endothelial cells to selectively respond to Wnt7 signals (WNT7A or WNT7B) (PubMed:25373781, PubMed:25558062, PubMed:28803732). Plays a key role in Wnt7-specific responses, such as endothelial cell sprouting and migration in the forebrain and neural tube, and establishment of the blood-brain barrier (PubMed:21071672, PubMed:21282641, PubMed:21421844, PubMed:25373781, PubMed:28288111). Acts as a Wnt7-specific coactivator of canonical Wnt signaling: required to deliver RECK-bound Wnt7 to frizzled by assembling a higher-order RECK-ADGRA2-Fzd-LRP5-LRP6 complex (By similarity). ADGRA2-tethering function does not rely on its G-protein coupled receptor (GPCR) structure but instead on its combined capacity to interact with RECK extracellularly and recruit the Dishevelled scaffolding protein intracellularly (By similarity). Binds to the glycosaminoglycans heparin, heparin sulfate, chondroitin sulfate and dermatan sulfate (By similarity).</text>
</comment>
<comment type="subunit">
    <text evidence="1 12 14">Interacts with RECK; the interaction is direct (PubMed:28803732). Interacts (via PDZ-binding motif) with DLG1 (via PDZ domains) (PubMed:25558062). The cleaved extracellular subunit interacts with the integrin heterodimer ITGAV:ITGB3 (By similarity).</text>
</comment>
<comment type="subcellular location">
    <subcellularLocation>
        <location evidence="12 14">Cell membrane</location>
        <topology evidence="2">Multi-pass membrane protein</topology>
    </subcellularLocation>
    <subcellularLocation>
        <location evidence="1">Cell projection</location>
        <location evidence="1">Filopodium</location>
    </subcellularLocation>
    <text evidence="1">Enriched at lateral cell borders and also at sites of cell-ECM (extracellular matrix) contact.</text>
</comment>
<comment type="tissue specificity">
    <text evidence="6 8 9">Abundantly expressed in the vasculature of the developing embryo (PubMed:11559528, PubMed:21071672, PubMed:21282641). Expression in normal adult tissues is specifically vascular with endothelial expression in CNS, including brain and retina and more widespread pericyte expression in the brain and organs, including the kidney, pancreas and corpus luteum (PubMed:21071672).</text>
</comment>
<comment type="developmental stage">
    <text evidence="7 9">At 10 dpc expressed in a wide variety of tissues with relatively more abundant expression in limb buds (PubMed:18848646). At 10.5-12.5 dpc, detected in vessels of the developing CNS and perineural vascular plexus (PNVP) (PubMed:21282641). Expressed in both endothelial cells and pericytes, most prominently in brain and neural tube, and to a lesser degrees in non-CNS embryonic organs, including the liver, heart, and kidney (PubMed:18848646, PubMed:21282641). Expressed also in embryonic epithelium of lung and esophagus and in mesenchyme (PubMed:18848646, PubMed:21282641). Detected in mesenchyme of the palatal shelf at 12.5 dpc (PubMed:21282641).</text>
</comment>
<comment type="induction">
    <text evidence="9">Up-regulated by the growth factors activin AB (INHBA: INHBB dimer) and TGFB1 in vitro.</text>
</comment>
<comment type="domain">
    <text evidence="12">The leucine-rich repeats (LRRs) are important for potentiation of Wnt7 signaling.</text>
</comment>
<comment type="domain">
    <text evidence="1">The RGD motif is involved in integrin ITGAV:ITGB3 binding.</text>
</comment>
<comment type="PTM">
    <text evidence="1">Glycosylated.</text>
</comment>
<comment type="PTM">
    <text evidence="1">Proteolytically cleaved into two subunits, an extracellular subunit and a seven-transmembrane subunit. Cleaved by thrombin (F2) and MMP1. Also cleaved by MMP9, with lower efficiency. Presence of the protein disulfide-isomerase P4HB at the cell surface is additionally required for shedding of the extracellular subunit, suggesting that the subunits are linked by disulfide bonds. Shedding is enhanced by the growth factor FGF2 and may promote cell survival during angiogenesis.</text>
</comment>
<comment type="disruption phenotype">
    <text evidence="8 9 10 11 13">No viable adults (PubMed:21071672, PubMed:21282641, PubMed:21421844). Beginning at 11 dpc, deficient embryos exhibit completely penetrant, progressive CNS hemorrhage originating in forebrain telencephalon and ventral neural tube leading to embryonic lethality from 15.5 dpc (PubMed:21071672, PubMed:21282641, PubMed:21421844). Embryos at 11.5 dpc display selective CNS-specific vascular patterning defects, with markedly reduced angiogenic sprouting into the forebrain telencephalon and thickening of the underlying periventricular vascular plexus rendering the telencephalon virtually avascular (PubMed:21071672, PubMed:21282641, PubMed:21421844, PubMed:25373781). Remaining CNS vessels show significantly increased permeability (PubMed:21421844). Lung size is reduced in 15.5 dpc embryos (PubMed:21282641). Cleft palate is present at 15.5 dpc or later (PubMed:21282641). Conditional knockout mice lacking Adgra2 in the endothelia of adult mice show blood-brain barrier integrity defects in a stroke model and glioblastoma (PubMed:28288111).</text>
</comment>
<comment type="similarity">
    <text evidence="17">Belongs to the G-protein coupled receptor 2 family. Adhesion G-protein coupled receptor (ADGR) subfamily.</text>
</comment>
<comment type="caution">
    <text evidence="17">It is uncertain whether Met-1 or Met-8 is the initiator.</text>
</comment>
<comment type="sequence caution" evidence="17">
    <conflict type="erroneous initiation">
        <sequence resource="EMBL-CDS" id="AAI38452"/>
    </conflict>
    <text>Truncated N-terminus.</text>
</comment>
<comment type="sequence caution" evidence="17">
    <conflict type="erroneous initiation">
        <sequence resource="EMBL-CDS" id="AAI38453"/>
    </conflict>
    <text>Truncated N-terminus.</text>
</comment>
<comment type="sequence caution" evidence="17">
    <conflict type="erroneous initiation">
        <sequence resource="EMBL-CDS" id="AAL11996"/>
    </conflict>
    <text>Truncated N-terminus.</text>
</comment>
<evidence type="ECO:0000250" key="1">
    <source>
        <dbReference type="UniProtKB" id="Q96PE1"/>
    </source>
</evidence>
<evidence type="ECO:0000255" key="2"/>
<evidence type="ECO:0000255" key="3">
    <source>
        <dbReference type="PROSITE-ProRule" id="PRU00098"/>
    </source>
</evidence>
<evidence type="ECO:0000255" key="4">
    <source>
        <dbReference type="PROSITE-ProRule" id="PRU00114"/>
    </source>
</evidence>
<evidence type="ECO:0000256" key="5">
    <source>
        <dbReference type="SAM" id="MobiDB-lite"/>
    </source>
</evidence>
<evidence type="ECO:0000269" key="6">
    <source>
    </source>
</evidence>
<evidence type="ECO:0000269" key="7">
    <source>
    </source>
</evidence>
<evidence type="ECO:0000269" key="8">
    <source>
    </source>
</evidence>
<evidence type="ECO:0000269" key="9">
    <source>
    </source>
</evidence>
<evidence type="ECO:0000269" key="10">
    <source>
    </source>
</evidence>
<evidence type="ECO:0000269" key="11">
    <source>
    </source>
</evidence>
<evidence type="ECO:0000269" key="12">
    <source>
    </source>
</evidence>
<evidence type="ECO:0000269" key="13">
    <source>
    </source>
</evidence>
<evidence type="ECO:0000269" key="14">
    <source>
    </source>
</evidence>
<evidence type="ECO:0000303" key="15">
    <source>
    </source>
</evidence>
<evidence type="ECO:0000303" key="16">
    <source>
    </source>
</evidence>
<evidence type="ECO:0000305" key="17"/>
<evidence type="ECO:0000312" key="18">
    <source>
        <dbReference type="MGI" id="MGI:1925810"/>
    </source>
</evidence>
<dbReference type="EMBL" id="AF378759">
    <property type="protein sequence ID" value="AAL11996.1"/>
    <property type="status" value="ALT_INIT"/>
    <property type="molecule type" value="mRNA"/>
</dbReference>
<dbReference type="EMBL" id="BC138451">
    <property type="protein sequence ID" value="AAI38452.1"/>
    <property type="status" value="ALT_INIT"/>
    <property type="molecule type" value="mRNA"/>
</dbReference>
<dbReference type="EMBL" id="BC138452">
    <property type="protein sequence ID" value="AAI38453.1"/>
    <property type="status" value="ALT_INIT"/>
    <property type="molecule type" value="mRNA"/>
</dbReference>
<dbReference type="CCDS" id="CCDS22210.2"/>
<dbReference type="RefSeq" id="NP_473385.2">
    <property type="nucleotide sequence ID" value="NM_054044.2"/>
</dbReference>
<dbReference type="SMR" id="Q91ZV8"/>
<dbReference type="FunCoup" id="Q91ZV8">
    <property type="interactions" value="1142"/>
</dbReference>
<dbReference type="STRING" id="10090.ENSMUSP00000033876"/>
<dbReference type="GlyCosmos" id="Q91ZV8">
    <property type="glycosylation" value="7 sites, No reported glycans"/>
</dbReference>
<dbReference type="GlyGen" id="Q91ZV8">
    <property type="glycosylation" value="10 sites, 6 N-linked glycans (7 sites)"/>
</dbReference>
<dbReference type="iPTMnet" id="Q91ZV8"/>
<dbReference type="PhosphoSitePlus" id="Q91ZV8"/>
<dbReference type="jPOST" id="Q91ZV8"/>
<dbReference type="PaxDb" id="10090-ENSMUSP00000033876"/>
<dbReference type="ProteomicsDB" id="296125"/>
<dbReference type="Pumba" id="Q91ZV8"/>
<dbReference type="Antibodypedia" id="1931">
    <property type="antibodies" value="316 antibodies from 32 providers"/>
</dbReference>
<dbReference type="DNASU" id="78560"/>
<dbReference type="Ensembl" id="ENSMUST00000033876.14">
    <property type="protein sequence ID" value="ENSMUSP00000033876.8"/>
    <property type="gene ID" value="ENSMUSG00000031486.16"/>
</dbReference>
<dbReference type="GeneID" id="78560"/>
<dbReference type="KEGG" id="mmu:78560"/>
<dbReference type="UCSC" id="uc009lhx.2">
    <property type="organism name" value="mouse"/>
</dbReference>
<dbReference type="AGR" id="MGI:1925810"/>
<dbReference type="CTD" id="25960"/>
<dbReference type="MGI" id="MGI:1925810">
    <property type="gene designation" value="Adgra2"/>
</dbReference>
<dbReference type="VEuPathDB" id="HostDB:ENSMUSG00000031486"/>
<dbReference type="eggNOG" id="KOG0619">
    <property type="taxonomic scope" value="Eukaryota"/>
</dbReference>
<dbReference type="GeneTree" id="ENSGT00940000158941"/>
<dbReference type="InParanoid" id="Q91ZV8"/>
<dbReference type="OMA" id="ADFGRGQ"/>
<dbReference type="OrthoDB" id="6134459at2759"/>
<dbReference type="PhylomeDB" id="Q91ZV8"/>
<dbReference type="TreeFam" id="TF331206"/>
<dbReference type="BioGRID-ORCS" id="78560">
    <property type="hits" value="3 hits in 79 CRISPR screens"/>
</dbReference>
<dbReference type="ChiTaRS" id="Adgra2">
    <property type="organism name" value="mouse"/>
</dbReference>
<dbReference type="PRO" id="PR:Q91ZV8"/>
<dbReference type="Proteomes" id="UP000000589">
    <property type="component" value="Chromosome 8"/>
</dbReference>
<dbReference type="RNAct" id="Q91ZV8">
    <property type="molecule type" value="protein"/>
</dbReference>
<dbReference type="Bgee" id="ENSMUSG00000031486">
    <property type="expression patterns" value="Expressed in umbilical cord and 164 other cell types or tissues"/>
</dbReference>
<dbReference type="ExpressionAtlas" id="Q91ZV8">
    <property type="expression patterns" value="baseline and differential"/>
</dbReference>
<dbReference type="GO" id="GO:0009986">
    <property type="term" value="C:cell surface"/>
    <property type="evidence" value="ECO:0000314"/>
    <property type="project" value="MGI"/>
</dbReference>
<dbReference type="GO" id="GO:0030175">
    <property type="term" value="C:filopodium"/>
    <property type="evidence" value="ECO:0007669"/>
    <property type="project" value="UniProtKB-SubCell"/>
</dbReference>
<dbReference type="GO" id="GO:0043231">
    <property type="term" value="C:intracellular membrane-bounded organelle"/>
    <property type="evidence" value="ECO:0007669"/>
    <property type="project" value="Ensembl"/>
</dbReference>
<dbReference type="GO" id="GO:0005886">
    <property type="term" value="C:plasma membrane"/>
    <property type="evidence" value="ECO:0000314"/>
    <property type="project" value="UniProtKB"/>
</dbReference>
<dbReference type="GO" id="GO:1990909">
    <property type="term" value="C:Wnt signalosome"/>
    <property type="evidence" value="ECO:0000250"/>
    <property type="project" value="UniProtKB"/>
</dbReference>
<dbReference type="GO" id="GO:0004930">
    <property type="term" value="F:G protein-coupled receptor activity"/>
    <property type="evidence" value="ECO:0007669"/>
    <property type="project" value="UniProtKB-KW"/>
</dbReference>
<dbReference type="GO" id="GO:0001525">
    <property type="term" value="P:angiogenesis"/>
    <property type="evidence" value="ECO:0000315"/>
    <property type="project" value="MGI"/>
</dbReference>
<dbReference type="GO" id="GO:0060070">
    <property type="term" value="P:canonical Wnt signaling pathway"/>
    <property type="evidence" value="ECO:0007669"/>
    <property type="project" value="Ensembl"/>
</dbReference>
<dbReference type="GO" id="GO:0007417">
    <property type="term" value="P:central nervous system development"/>
    <property type="evidence" value="ECO:0000315"/>
    <property type="project" value="UniProtKB"/>
</dbReference>
<dbReference type="GO" id="GO:0043542">
    <property type="term" value="P:endothelial cell migration"/>
    <property type="evidence" value="ECO:0000315"/>
    <property type="project" value="UniProtKB"/>
</dbReference>
<dbReference type="GO" id="GO:1900747">
    <property type="term" value="P:negative regulation of vascular endothelial growth factor signaling pathway"/>
    <property type="evidence" value="ECO:0000315"/>
    <property type="project" value="MGI"/>
</dbReference>
<dbReference type="GO" id="GO:0090263">
    <property type="term" value="P:positive regulation of canonical Wnt signaling pathway"/>
    <property type="evidence" value="ECO:0000314"/>
    <property type="project" value="UniProtKB"/>
</dbReference>
<dbReference type="GO" id="GO:0010595">
    <property type="term" value="P:positive regulation of endothelial cell migration"/>
    <property type="evidence" value="ECO:0000314"/>
    <property type="project" value="MGI"/>
</dbReference>
<dbReference type="GO" id="GO:0045765">
    <property type="term" value="P:regulation of angiogenesis"/>
    <property type="evidence" value="ECO:0000315"/>
    <property type="project" value="UniProtKB"/>
</dbReference>
<dbReference type="GO" id="GO:0050920">
    <property type="term" value="P:regulation of chemotaxis"/>
    <property type="evidence" value="ECO:0000315"/>
    <property type="project" value="UniProtKB"/>
</dbReference>
<dbReference type="GO" id="GO:0090210">
    <property type="term" value="P:regulation of establishment of blood-brain barrier"/>
    <property type="evidence" value="ECO:0000315"/>
    <property type="project" value="UniProtKB"/>
</dbReference>
<dbReference type="GO" id="GO:0002040">
    <property type="term" value="P:sprouting angiogenesis"/>
    <property type="evidence" value="ECO:0000315"/>
    <property type="project" value="UniProtKB"/>
</dbReference>
<dbReference type="CDD" id="cd15998">
    <property type="entry name" value="7tmB2_GPR124"/>
    <property type="match status" value="1"/>
</dbReference>
<dbReference type="FunFam" id="2.60.220.50:FF:000012">
    <property type="entry name" value="Adhesion G protein-coupled receptor A2"/>
    <property type="match status" value="1"/>
</dbReference>
<dbReference type="FunFam" id="2.60.40.10:FF:000496">
    <property type="entry name" value="Adhesion G protein-coupled receptor A2"/>
    <property type="match status" value="1"/>
</dbReference>
<dbReference type="FunFam" id="3.80.10.10:FF:000242">
    <property type="entry name" value="Adhesion G protein-coupled receptor A2"/>
    <property type="match status" value="1"/>
</dbReference>
<dbReference type="Gene3D" id="2.60.220.50">
    <property type="match status" value="1"/>
</dbReference>
<dbReference type="Gene3D" id="4.10.1240.10">
    <property type="entry name" value="GPCR, family 2, extracellular hormone receptor domain"/>
    <property type="match status" value="1"/>
</dbReference>
<dbReference type="Gene3D" id="2.60.40.10">
    <property type="entry name" value="Immunoglobulins"/>
    <property type="match status" value="1"/>
</dbReference>
<dbReference type="Gene3D" id="1.20.1070.10">
    <property type="entry name" value="Rhodopsin 7-helix transmembrane proteins"/>
    <property type="match status" value="1"/>
</dbReference>
<dbReference type="Gene3D" id="3.80.10.10">
    <property type="entry name" value="Ribonuclease Inhibitor"/>
    <property type="match status" value="2"/>
</dbReference>
<dbReference type="InterPro" id="IPR051963">
    <property type="entry name" value="Adhesion_GPCR_A"/>
</dbReference>
<dbReference type="InterPro" id="IPR000483">
    <property type="entry name" value="Cys-rich_flank_reg_C"/>
</dbReference>
<dbReference type="InterPro" id="IPR057244">
    <property type="entry name" value="GAIN_B"/>
</dbReference>
<dbReference type="InterPro" id="IPR046338">
    <property type="entry name" value="GAIN_dom_sf"/>
</dbReference>
<dbReference type="InterPro" id="IPR017981">
    <property type="entry name" value="GPCR_2-like_7TM"/>
</dbReference>
<dbReference type="InterPro" id="IPR036445">
    <property type="entry name" value="GPCR_2_extracell_dom_sf"/>
</dbReference>
<dbReference type="InterPro" id="IPR001879">
    <property type="entry name" value="GPCR_2_extracellular_dom"/>
</dbReference>
<dbReference type="InterPro" id="IPR000832">
    <property type="entry name" value="GPCR_2_secretin-like"/>
</dbReference>
<dbReference type="InterPro" id="IPR017983">
    <property type="entry name" value="GPCR_2_secretin-like_CS"/>
</dbReference>
<dbReference type="InterPro" id="IPR000203">
    <property type="entry name" value="GPS"/>
</dbReference>
<dbReference type="InterPro" id="IPR007110">
    <property type="entry name" value="Ig-like_dom"/>
</dbReference>
<dbReference type="InterPro" id="IPR036179">
    <property type="entry name" value="Ig-like_dom_sf"/>
</dbReference>
<dbReference type="InterPro" id="IPR013783">
    <property type="entry name" value="Ig-like_fold"/>
</dbReference>
<dbReference type="InterPro" id="IPR003599">
    <property type="entry name" value="Ig_sub"/>
</dbReference>
<dbReference type="InterPro" id="IPR001611">
    <property type="entry name" value="Leu-rich_rpt"/>
</dbReference>
<dbReference type="InterPro" id="IPR003591">
    <property type="entry name" value="Leu-rich_rpt_typical-subtyp"/>
</dbReference>
<dbReference type="InterPro" id="IPR032675">
    <property type="entry name" value="LRR_dom_sf"/>
</dbReference>
<dbReference type="PANTHER" id="PTHR45930:SF1">
    <property type="entry name" value="ADHESION G PROTEIN-COUPLED RECEPTOR A2"/>
    <property type="match status" value="1"/>
</dbReference>
<dbReference type="PANTHER" id="PTHR45930">
    <property type="entry name" value="G-PROTEIN COUPLED RECEPTOR 124-LIKE PROTEIN"/>
    <property type="match status" value="1"/>
</dbReference>
<dbReference type="Pfam" id="PF00002">
    <property type="entry name" value="7tm_2"/>
    <property type="match status" value="1"/>
</dbReference>
<dbReference type="Pfam" id="PF01825">
    <property type="entry name" value="GPS"/>
    <property type="match status" value="1"/>
</dbReference>
<dbReference type="Pfam" id="PF13855">
    <property type="entry name" value="LRR_8"/>
    <property type="match status" value="1"/>
</dbReference>
<dbReference type="SMART" id="SM00409">
    <property type="entry name" value="IG"/>
    <property type="match status" value="1"/>
</dbReference>
<dbReference type="SMART" id="SM00369">
    <property type="entry name" value="LRR_TYP"/>
    <property type="match status" value="4"/>
</dbReference>
<dbReference type="SMART" id="SM00082">
    <property type="entry name" value="LRRCT"/>
    <property type="match status" value="1"/>
</dbReference>
<dbReference type="SUPFAM" id="SSF111418">
    <property type="entry name" value="Hormone receptor domain"/>
    <property type="match status" value="1"/>
</dbReference>
<dbReference type="SUPFAM" id="SSF48726">
    <property type="entry name" value="Immunoglobulin"/>
    <property type="match status" value="1"/>
</dbReference>
<dbReference type="SUPFAM" id="SSF52058">
    <property type="entry name" value="L domain-like"/>
    <property type="match status" value="1"/>
</dbReference>
<dbReference type="PROSITE" id="PS00650">
    <property type="entry name" value="G_PROTEIN_RECEP_F2_2"/>
    <property type="match status" value="1"/>
</dbReference>
<dbReference type="PROSITE" id="PS50227">
    <property type="entry name" value="G_PROTEIN_RECEP_F2_3"/>
    <property type="match status" value="1"/>
</dbReference>
<dbReference type="PROSITE" id="PS50261">
    <property type="entry name" value="G_PROTEIN_RECEP_F2_4"/>
    <property type="match status" value="1"/>
</dbReference>
<dbReference type="PROSITE" id="PS50221">
    <property type="entry name" value="GAIN_B"/>
    <property type="match status" value="1"/>
</dbReference>
<dbReference type="PROSITE" id="PS50835">
    <property type="entry name" value="IG_LIKE"/>
    <property type="match status" value="1"/>
</dbReference>
<dbReference type="PROSITE" id="PS51450">
    <property type="entry name" value="LRR"/>
    <property type="match status" value="3"/>
</dbReference>
<name>AGRA2_MOUSE</name>
<gene>
    <name evidence="18" type="primary">Adgra2</name>
    <name evidence="16 18" type="synonym">Gpr124</name>
    <name evidence="15" type="synonym">Tem5</name>
</gene>
<sequence length="1336" mass="143170">MGAGGRRMPVPPARLLLLPLLPCLLLLAPGTRGAPGCPVPIRGCKCSGERPKGLSGGAHNPARRRVVCGGGDLPEPPDPGLLPNGTITLLLSNNKITGLRNGSFLGLSLLEKLDLRSNVISTVQPGAFLGLGELKRLDLSNNRIGCLTSETFQGLPRLLRLNISGNIYSSLQPGVFDELPALKIVDFGTEFLTCDCRLRWLLPWARNHSLQLSERTLCAYPSALHAHALSSLQESQLRCEGALELHTHYLIPSLRQVVFQGDRLPFQCSASYLGNDTRIHWYHNGAPMESDEQAGIVLAENLIHDCTFITSELTLSHIGVWASGEWECSVSTVQGNTSKKVEIVVLETSASYCPAERVTNNRGDFRWPRTLAGITAYQSCLQYPFTSVPLSGGAPGTRASRRCDRAGRWEPGDYSHCLYTNDITRVLYTFVLMPINASNALTLAHQLRVYTAEAASFSDMMDVVYVAQMIQKFLGYVDQIKELVEVMVDMASNLMLVDEHLLWLAQREDKACSGIVGALERIGGAALSPHAQHISVNSRNVALEAYLIKPHSYVGLTCTAFQRREVGVSGAQPSSVGQDAPVEPEPLADQQLRFRCTTGRPNISLSSFHIKNSVALASIQLPPSLFSTLPAALAPPVPPDCTLQLLVFRNGRLFRSHGNNTSRPGAAGPGKRRGVATPVIFAGTSGCGVGNLTEPVAVSLRHWAEGADPMAAWWNQDGPGGWSSEGCRLRYSQPNVSSLYCQHLGNVAVLMELNAFPREAGGSGAGLHPVVYPCTALLLLCLFSTIITYILNHSSIHVSRKGWHMLLNLCFHMAMTSAVFVGGVTLTNYQMVCQAVGITLHYSSLSSLLWMGVKARVLHKELSWRAPPLEEGEAAPPGPRPMLRFYLIAGGIPLIICGITAAVNIHNYRDHSPYCWLVWRPSLGAFYIPVALILPITWIYFLCAGLHLRSHVAQNPKQGNRISLEPGEELRGSTRLRSSGVLLNDSGSLLATVSAGVGTPAPPEDGDGVYSPGVQLGALMTTHFLYLAMWACGALAVSQRWLPRVVCSCLYGVAASALGLFVFTHHCARRRDVRASWRACCPPASPSASHVPARALPTATEDGSPVLGEGPASLKSSPSGSSGRAPPPPCKLTNLQVAQSQVCEASVAARGDGEPEPTGSRGSLAPRHHNNLHHGRRVHKSRAKGHRAGETGGKSRLKALRAGTSPGAPELLSSESGSLHNSPSDSYPGSSRNSPGDGLPLEGEPMLTPSEGSDTSAAPIAETGRPGQRRSASRDNLKGSGSALERESKRRSYPLNTTSLNGAPKGGKYEDASVTGAEAIAGGSMKTGLWKSETTV</sequence>
<keyword id="KW-0037">Angiogenesis</keyword>
<keyword id="KW-1003">Cell membrane</keyword>
<keyword id="KW-0966">Cell projection</keyword>
<keyword id="KW-1015">Disulfide bond</keyword>
<keyword id="KW-0297">G-protein coupled receptor</keyword>
<keyword id="KW-0325">Glycoprotein</keyword>
<keyword id="KW-0393">Immunoglobulin domain</keyword>
<keyword id="KW-0433">Leucine-rich repeat</keyword>
<keyword id="KW-0472">Membrane</keyword>
<keyword id="KW-0597">Phosphoprotein</keyword>
<keyword id="KW-0675">Receptor</keyword>
<keyword id="KW-1185">Reference proteome</keyword>
<keyword id="KW-0677">Repeat</keyword>
<keyword id="KW-0732">Signal</keyword>
<keyword id="KW-0807">Transducer</keyword>
<keyword id="KW-0812">Transmembrane</keyword>
<keyword id="KW-1133">Transmembrane helix</keyword>
<keyword id="KW-0879">Wnt signaling pathway</keyword>
<accession>Q91ZV8</accession>
<accession>B2RRK0</accession>
<proteinExistence type="evidence at protein level"/>
<organism>
    <name type="scientific">Mus musculus</name>
    <name type="common">Mouse</name>
    <dbReference type="NCBI Taxonomy" id="10090"/>
    <lineage>
        <taxon>Eukaryota</taxon>
        <taxon>Metazoa</taxon>
        <taxon>Chordata</taxon>
        <taxon>Craniata</taxon>
        <taxon>Vertebrata</taxon>
        <taxon>Euteleostomi</taxon>
        <taxon>Mammalia</taxon>
        <taxon>Eutheria</taxon>
        <taxon>Euarchontoglires</taxon>
        <taxon>Glires</taxon>
        <taxon>Rodentia</taxon>
        <taxon>Myomorpha</taxon>
        <taxon>Muroidea</taxon>
        <taxon>Muridae</taxon>
        <taxon>Murinae</taxon>
        <taxon>Mus</taxon>
        <taxon>Mus</taxon>
    </lineage>
</organism>